<gene>
    <name evidence="1" type="primary">atpD1</name>
    <name type="ordered locus">RHOS4_08850</name>
    <name type="ORF">RSP_2299</name>
</gene>
<organism>
    <name type="scientific">Cereibacter sphaeroides (strain ATCC 17023 / DSM 158 / JCM 6121 / CCUG 31486 / LMG 2827 / NBRC 12203 / NCIMB 8253 / ATH 2.4.1.)</name>
    <name type="common">Rhodobacter sphaeroides</name>
    <dbReference type="NCBI Taxonomy" id="272943"/>
    <lineage>
        <taxon>Bacteria</taxon>
        <taxon>Pseudomonadati</taxon>
        <taxon>Pseudomonadota</taxon>
        <taxon>Alphaproteobacteria</taxon>
        <taxon>Rhodobacterales</taxon>
        <taxon>Paracoccaceae</taxon>
        <taxon>Cereibacter</taxon>
    </lineage>
</organism>
<name>ATPB1_CERS4</name>
<proteinExistence type="inferred from homology"/>
<accession>Q3J431</accession>
<reference key="1">
    <citation type="submission" date="2005-09" db="EMBL/GenBank/DDBJ databases">
        <title>Complete sequence of chromosome 1 of Rhodobacter sphaeroides 2.4.1.</title>
        <authorList>
            <person name="Copeland A."/>
            <person name="Lucas S."/>
            <person name="Lapidus A."/>
            <person name="Barry K."/>
            <person name="Detter J.C."/>
            <person name="Glavina T."/>
            <person name="Hammon N."/>
            <person name="Israni S."/>
            <person name="Pitluck S."/>
            <person name="Richardson P."/>
            <person name="Mackenzie C."/>
            <person name="Choudhary M."/>
            <person name="Larimer F."/>
            <person name="Hauser L.J."/>
            <person name="Land M."/>
            <person name="Donohue T.J."/>
            <person name="Kaplan S."/>
        </authorList>
    </citation>
    <scope>NUCLEOTIDE SEQUENCE [LARGE SCALE GENOMIC DNA]</scope>
    <source>
        <strain>ATCC 17023 / DSM 158 / JCM 6121 / CCUG 31486 / LMG 2827 / NBRC 12203 / NCIMB 8253 / ATH 2.4.1.</strain>
    </source>
</reference>
<comment type="function">
    <text evidence="1">Produces ATP from ADP in the presence of a proton gradient across the membrane. The catalytic sites are hosted primarily by the beta subunits.</text>
</comment>
<comment type="catalytic activity">
    <reaction evidence="1">
        <text>ATP + H2O + 4 H(+)(in) = ADP + phosphate + 5 H(+)(out)</text>
        <dbReference type="Rhea" id="RHEA:57720"/>
        <dbReference type="ChEBI" id="CHEBI:15377"/>
        <dbReference type="ChEBI" id="CHEBI:15378"/>
        <dbReference type="ChEBI" id="CHEBI:30616"/>
        <dbReference type="ChEBI" id="CHEBI:43474"/>
        <dbReference type="ChEBI" id="CHEBI:456216"/>
        <dbReference type="EC" id="7.1.2.2"/>
    </reaction>
</comment>
<comment type="subunit">
    <text evidence="1">F-type ATPases have 2 components, CF(1) - the catalytic core - and CF(0) - the membrane proton channel. CF(1) has five subunits: alpha(3), beta(3), gamma(1), delta(1), epsilon(1). CF(0) has four main subunits: a(1), b(1), b'(1) and c(9-12).</text>
</comment>
<comment type="subcellular location">
    <subcellularLocation>
        <location evidence="1">Cell inner membrane</location>
        <topology evidence="1">Peripheral membrane protein</topology>
    </subcellularLocation>
</comment>
<comment type="similarity">
    <text evidence="1">Belongs to the ATPase alpha/beta chains family.</text>
</comment>
<keyword id="KW-0066">ATP synthesis</keyword>
<keyword id="KW-0067">ATP-binding</keyword>
<keyword id="KW-0997">Cell inner membrane</keyword>
<keyword id="KW-1003">Cell membrane</keyword>
<keyword id="KW-0139">CF(1)</keyword>
<keyword id="KW-0375">Hydrogen ion transport</keyword>
<keyword id="KW-0406">Ion transport</keyword>
<keyword id="KW-0472">Membrane</keyword>
<keyword id="KW-0547">Nucleotide-binding</keyword>
<keyword id="KW-1185">Reference proteome</keyword>
<keyword id="KW-1278">Translocase</keyword>
<keyword id="KW-0813">Transport</keyword>
<sequence>MATASQGKVTQVIGAVVDVQFDGGLPPILNALETENNGKRLVLEVAQHLGESTVRTIAMDATEGLVRGARVTDTGSPISVPVGDATLGRILNVIGEPIDEKGDLGEASTRAIHQPAPTFAEQSTTSEILVTGIKVIDLLAPYSKGGKIGLFGGAGVGKTVLIMELINNIAKVHSGYSVFAGVGERTREGNDLYHEMIESGVIKIDNLSESKVALVYGQMNEPPGARARVALTGLTLAEQFRDQSGTDVLFFVDNIFRFTQAGSEVSALLGRIPSAVGYQPTLATDMGALQERITSTKAGSITSVQAIYVPADDLTDPAPATSFAHLDATTVLSRAISELGIYPAVDPLDSTSRILDPQIVGEEHYNVARAVQGILQRYKSLQDIIAILGMDELSEEDKLSVARARKIQRFLSQPFDVAKVFTGSDGVQVPLEKTIASFKAVVNGEYDHLPEAAFYMVGDIEDVIAKAQRLAAQAA</sequence>
<protein>
    <recommendedName>
        <fullName evidence="1">ATP synthase subunit beta 1</fullName>
        <ecNumber evidence="1">7.1.2.2</ecNumber>
    </recommendedName>
    <alternativeName>
        <fullName evidence="1">ATP synthase F1 sector subunit beta 1</fullName>
    </alternativeName>
    <alternativeName>
        <fullName evidence="1">F-ATPase subunit beta 1</fullName>
    </alternativeName>
</protein>
<dbReference type="EC" id="7.1.2.2" evidence="1"/>
<dbReference type="EMBL" id="CP000143">
    <property type="protein sequence ID" value="ABA78453.1"/>
    <property type="molecule type" value="Genomic_DNA"/>
</dbReference>
<dbReference type="RefSeq" id="YP_352354.1">
    <property type="nucleotide sequence ID" value="NC_007493.2"/>
</dbReference>
<dbReference type="SMR" id="Q3J431"/>
<dbReference type="STRING" id="272943.RSP_2299"/>
<dbReference type="EnsemblBacteria" id="ABA78453">
    <property type="protein sequence ID" value="ABA78453"/>
    <property type="gene ID" value="RSP_2299"/>
</dbReference>
<dbReference type="KEGG" id="rsp:RSP_2299"/>
<dbReference type="PATRIC" id="fig|272943.9.peg.1210"/>
<dbReference type="eggNOG" id="COG0055">
    <property type="taxonomic scope" value="Bacteria"/>
</dbReference>
<dbReference type="OrthoDB" id="9801639at2"/>
<dbReference type="PhylomeDB" id="Q3J431"/>
<dbReference type="Proteomes" id="UP000002703">
    <property type="component" value="Chromosome 1"/>
</dbReference>
<dbReference type="GO" id="GO:0005886">
    <property type="term" value="C:plasma membrane"/>
    <property type="evidence" value="ECO:0007669"/>
    <property type="project" value="UniProtKB-SubCell"/>
</dbReference>
<dbReference type="GO" id="GO:0045259">
    <property type="term" value="C:proton-transporting ATP synthase complex"/>
    <property type="evidence" value="ECO:0007669"/>
    <property type="project" value="UniProtKB-KW"/>
</dbReference>
<dbReference type="GO" id="GO:0005524">
    <property type="term" value="F:ATP binding"/>
    <property type="evidence" value="ECO:0007669"/>
    <property type="project" value="UniProtKB-UniRule"/>
</dbReference>
<dbReference type="GO" id="GO:0016887">
    <property type="term" value="F:ATP hydrolysis activity"/>
    <property type="evidence" value="ECO:0007669"/>
    <property type="project" value="InterPro"/>
</dbReference>
<dbReference type="GO" id="GO:0046933">
    <property type="term" value="F:proton-transporting ATP synthase activity, rotational mechanism"/>
    <property type="evidence" value="ECO:0007669"/>
    <property type="project" value="UniProtKB-UniRule"/>
</dbReference>
<dbReference type="CDD" id="cd18110">
    <property type="entry name" value="ATP-synt_F1_beta_C"/>
    <property type="match status" value="1"/>
</dbReference>
<dbReference type="CDD" id="cd18115">
    <property type="entry name" value="ATP-synt_F1_beta_N"/>
    <property type="match status" value="1"/>
</dbReference>
<dbReference type="CDD" id="cd01133">
    <property type="entry name" value="F1-ATPase_beta_CD"/>
    <property type="match status" value="1"/>
</dbReference>
<dbReference type="FunFam" id="1.10.1140.10:FF:000001">
    <property type="entry name" value="ATP synthase subunit beta"/>
    <property type="match status" value="1"/>
</dbReference>
<dbReference type="FunFam" id="2.40.10.170:FF:000004">
    <property type="entry name" value="ATP synthase subunit beta"/>
    <property type="match status" value="1"/>
</dbReference>
<dbReference type="FunFam" id="3.40.50.300:FF:000026">
    <property type="entry name" value="ATP synthase subunit beta"/>
    <property type="match status" value="1"/>
</dbReference>
<dbReference type="Gene3D" id="2.40.10.170">
    <property type="match status" value="1"/>
</dbReference>
<dbReference type="Gene3D" id="1.10.1140.10">
    <property type="entry name" value="Bovine Mitochondrial F1-atpase, Atp Synthase Beta Chain, Chain D, domain 3"/>
    <property type="match status" value="1"/>
</dbReference>
<dbReference type="Gene3D" id="3.40.50.300">
    <property type="entry name" value="P-loop containing nucleotide triphosphate hydrolases"/>
    <property type="match status" value="1"/>
</dbReference>
<dbReference type="HAMAP" id="MF_01347">
    <property type="entry name" value="ATP_synth_beta_bact"/>
    <property type="match status" value="1"/>
</dbReference>
<dbReference type="InterPro" id="IPR003593">
    <property type="entry name" value="AAA+_ATPase"/>
</dbReference>
<dbReference type="InterPro" id="IPR055190">
    <property type="entry name" value="ATP-synt_VA_C"/>
</dbReference>
<dbReference type="InterPro" id="IPR005722">
    <property type="entry name" value="ATP_synth_F1_bsu"/>
</dbReference>
<dbReference type="InterPro" id="IPR020003">
    <property type="entry name" value="ATPase_a/bsu_AS"/>
</dbReference>
<dbReference type="InterPro" id="IPR050053">
    <property type="entry name" value="ATPase_alpha/beta_chains"/>
</dbReference>
<dbReference type="InterPro" id="IPR004100">
    <property type="entry name" value="ATPase_F1/V1/A1_a/bsu_N"/>
</dbReference>
<dbReference type="InterPro" id="IPR036121">
    <property type="entry name" value="ATPase_F1/V1/A1_a/bsu_N_sf"/>
</dbReference>
<dbReference type="InterPro" id="IPR000194">
    <property type="entry name" value="ATPase_F1/V1/A1_a/bsu_nucl-bd"/>
</dbReference>
<dbReference type="InterPro" id="IPR024034">
    <property type="entry name" value="ATPase_F1/V1_b/a_C"/>
</dbReference>
<dbReference type="InterPro" id="IPR027417">
    <property type="entry name" value="P-loop_NTPase"/>
</dbReference>
<dbReference type="NCBIfam" id="TIGR01039">
    <property type="entry name" value="atpD"/>
    <property type="match status" value="1"/>
</dbReference>
<dbReference type="PANTHER" id="PTHR15184">
    <property type="entry name" value="ATP SYNTHASE"/>
    <property type="match status" value="1"/>
</dbReference>
<dbReference type="PANTHER" id="PTHR15184:SF71">
    <property type="entry name" value="ATP SYNTHASE SUBUNIT BETA, MITOCHONDRIAL"/>
    <property type="match status" value="1"/>
</dbReference>
<dbReference type="Pfam" id="PF00006">
    <property type="entry name" value="ATP-synt_ab"/>
    <property type="match status" value="1"/>
</dbReference>
<dbReference type="Pfam" id="PF02874">
    <property type="entry name" value="ATP-synt_ab_N"/>
    <property type="match status" value="1"/>
</dbReference>
<dbReference type="Pfam" id="PF22919">
    <property type="entry name" value="ATP-synt_VA_C"/>
    <property type="match status" value="1"/>
</dbReference>
<dbReference type="PIRSF" id="PIRSF039072">
    <property type="entry name" value="ATPase_subunit_beta"/>
    <property type="match status" value="1"/>
</dbReference>
<dbReference type="SMART" id="SM00382">
    <property type="entry name" value="AAA"/>
    <property type="match status" value="1"/>
</dbReference>
<dbReference type="SUPFAM" id="SSF47917">
    <property type="entry name" value="C-terminal domain of alpha and beta subunits of F1 ATP synthase"/>
    <property type="match status" value="1"/>
</dbReference>
<dbReference type="SUPFAM" id="SSF50615">
    <property type="entry name" value="N-terminal domain of alpha and beta subunits of F1 ATP synthase"/>
    <property type="match status" value="1"/>
</dbReference>
<dbReference type="SUPFAM" id="SSF52540">
    <property type="entry name" value="P-loop containing nucleoside triphosphate hydrolases"/>
    <property type="match status" value="1"/>
</dbReference>
<dbReference type="PROSITE" id="PS00152">
    <property type="entry name" value="ATPASE_ALPHA_BETA"/>
    <property type="match status" value="1"/>
</dbReference>
<feature type="chain" id="PRO_0000254354" description="ATP synthase subunit beta 1">
    <location>
        <begin position="1"/>
        <end position="475"/>
    </location>
</feature>
<feature type="binding site" evidence="1">
    <location>
        <begin position="152"/>
        <end position="159"/>
    </location>
    <ligand>
        <name>ATP</name>
        <dbReference type="ChEBI" id="CHEBI:30616"/>
    </ligand>
</feature>
<evidence type="ECO:0000255" key="1">
    <source>
        <dbReference type="HAMAP-Rule" id="MF_01347"/>
    </source>
</evidence>